<feature type="chain" id="PRO_0000082846" description="Peptide deformylase">
    <location>
        <begin position="1"/>
        <end position="183"/>
    </location>
</feature>
<feature type="active site" evidence="1">
    <location>
        <position position="155"/>
    </location>
</feature>
<feature type="binding site" evidence="1">
    <location>
        <position position="111"/>
    </location>
    <ligand>
        <name>Fe cation</name>
        <dbReference type="ChEBI" id="CHEBI:24875"/>
    </ligand>
</feature>
<feature type="binding site" evidence="1">
    <location>
        <position position="154"/>
    </location>
    <ligand>
        <name>Fe cation</name>
        <dbReference type="ChEBI" id="CHEBI:24875"/>
    </ligand>
</feature>
<feature type="binding site" evidence="1">
    <location>
        <position position="158"/>
    </location>
    <ligand>
        <name>Fe cation</name>
        <dbReference type="ChEBI" id="CHEBI:24875"/>
    </ligand>
</feature>
<protein>
    <recommendedName>
        <fullName evidence="1">Peptide deformylase</fullName>
        <shortName evidence="1">PDF</shortName>
        <ecNumber evidence="1">3.5.1.88</ecNumber>
    </recommendedName>
    <alternativeName>
        <fullName evidence="1">Polypeptide deformylase</fullName>
    </alternativeName>
</protein>
<comment type="function">
    <text evidence="1">Removes the formyl group from the N-terminal Met of newly synthesized proteins. Requires at least a dipeptide for an efficient rate of reaction. N-terminal L-methionine is a prerequisite for activity but the enzyme has broad specificity at other positions.</text>
</comment>
<comment type="catalytic activity">
    <reaction evidence="1">
        <text>N-terminal N-formyl-L-methionyl-[peptide] + H2O = N-terminal L-methionyl-[peptide] + formate</text>
        <dbReference type="Rhea" id="RHEA:24420"/>
        <dbReference type="Rhea" id="RHEA-COMP:10639"/>
        <dbReference type="Rhea" id="RHEA-COMP:10640"/>
        <dbReference type="ChEBI" id="CHEBI:15377"/>
        <dbReference type="ChEBI" id="CHEBI:15740"/>
        <dbReference type="ChEBI" id="CHEBI:49298"/>
        <dbReference type="ChEBI" id="CHEBI:64731"/>
        <dbReference type="EC" id="3.5.1.88"/>
    </reaction>
</comment>
<comment type="cofactor">
    <cofactor evidence="1">
        <name>Fe(2+)</name>
        <dbReference type="ChEBI" id="CHEBI:29033"/>
    </cofactor>
    <text evidence="1">Binds 1 Fe(2+) ion.</text>
</comment>
<comment type="similarity">
    <text evidence="1">Belongs to the polypeptide deformylase family.</text>
</comment>
<sequence>MITMKDIIRDGHPTLREKAKELSFPLSNNDKETLRAMREFLINSQDEETAKRYGLRSGVGLAAPQINEPKRMIAVYLPDDGNGKSYDYMLVNPKIMSYSVQEAYLPTGEGCLSVDENIPGLVHRHHRVTIKAQDIDGNDVKLRLKGYPAIVFQHEIDHLNGIMFYDYIDANEPLKPHEEAVEV</sequence>
<organism>
    <name type="scientific">Staphylococcus epidermidis (strain ATCC 35984 / DSM 28319 / BCRC 17069 / CCUG 31568 / BM 3577 / RP62A)</name>
    <dbReference type="NCBI Taxonomy" id="176279"/>
    <lineage>
        <taxon>Bacteria</taxon>
        <taxon>Bacillati</taxon>
        <taxon>Bacillota</taxon>
        <taxon>Bacilli</taxon>
        <taxon>Bacillales</taxon>
        <taxon>Staphylococcaceae</taxon>
        <taxon>Staphylococcus</taxon>
    </lineage>
</organism>
<name>DEF_STAEQ</name>
<dbReference type="EC" id="3.5.1.88" evidence="1"/>
<dbReference type="EMBL" id="CP000029">
    <property type="protein sequence ID" value="AAW54042.1"/>
    <property type="molecule type" value="Genomic_DNA"/>
</dbReference>
<dbReference type="RefSeq" id="WP_001831696.1">
    <property type="nucleotide sequence ID" value="NC_002976.3"/>
</dbReference>
<dbReference type="SMR" id="Q5HQ78"/>
<dbReference type="STRING" id="176279.SERP0678"/>
<dbReference type="GeneID" id="50019072"/>
<dbReference type="KEGG" id="ser:SERP0678"/>
<dbReference type="eggNOG" id="COG0242">
    <property type="taxonomic scope" value="Bacteria"/>
</dbReference>
<dbReference type="HOGENOM" id="CLU_061901_4_0_9"/>
<dbReference type="BRENDA" id="3.5.1.88">
    <property type="organism ID" value="5875"/>
</dbReference>
<dbReference type="Proteomes" id="UP000000531">
    <property type="component" value="Chromosome"/>
</dbReference>
<dbReference type="GO" id="GO:0046872">
    <property type="term" value="F:metal ion binding"/>
    <property type="evidence" value="ECO:0007669"/>
    <property type="project" value="UniProtKB-KW"/>
</dbReference>
<dbReference type="GO" id="GO:0042586">
    <property type="term" value="F:peptide deformylase activity"/>
    <property type="evidence" value="ECO:0007669"/>
    <property type="project" value="UniProtKB-UniRule"/>
</dbReference>
<dbReference type="GO" id="GO:0043686">
    <property type="term" value="P:co-translational protein modification"/>
    <property type="evidence" value="ECO:0007669"/>
    <property type="project" value="TreeGrafter"/>
</dbReference>
<dbReference type="GO" id="GO:0006412">
    <property type="term" value="P:translation"/>
    <property type="evidence" value="ECO:0007669"/>
    <property type="project" value="UniProtKB-UniRule"/>
</dbReference>
<dbReference type="CDD" id="cd00487">
    <property type="entry name" value="Pep_deformylase"/>
    <property type="match status" value="1"/>
</dbReference>
<dbReference type="FunFam" id="3.90.45.10:FF:000002">
    <property type="entry name" value="Peptide deformylase"/>
    <property type="match status" value="1"/>
</dbReference>
<dbReference type="Gene3D" id="3.90.45.10">
    <property type="entry name" value="Peptide deformylase"/>
    <property type="match status" value="1"/>
</dbReference>
<dbReference type="HAMAP" id="MF_00163">
    <property type="entry name" value="Pep_deformylase"/>
    <property type="match status" value="1"/>
</dbReference>
<dbReference type="InterPro" id="IPR023635">
    <property type="entry name" value="Peptide_deformylase"/>
</dbReference>
<dbReference type="InterPro" id="IPR036821">
    <property type="entry name" value="Peptide_deformylase_sf"/>
</dbReference>
<dbReference type="NCBIfam" id="TIGR00079">
    <property type="entry name" value="pept_deformyl"/>
    <property type="match status" value="1"/>
</dbReference>
<dbReference type="PANTHER" id="PTHR10458">
    <property type="entry name" value="PEPTIDE DEFORMYLASE"/>
    <property type="match status" value="1"/>
</dbReference>
<dbReference type="PANTHER" id="PTHR10458:SF8">
    <property type="entry name" value="PEPTIDE DEFORMYLASE 2"/>
    <property type="match status" value="1"/>
</dbReference>
<dbReference type="Pfam" id="PF01327">
    <property type="entry name" value="Pep_deformylase"/>
    <property type="match status" value="1"/>
</dbReference>
<dbReference type="PIRSF" id="PIRSF004749">
    <property type="entry name" value="Pep_def"/>
    <property type="match status" value="1"/>
</dbReference>
<dbReference type="PRINTS" id="PR01576">
    <property type="entry name" value="PDEFORMYLASE"/>
</dbReference>
<dbReference type="SUPFAM" id="SSF56420">
    <property type="entry name" value="Peptide deformylase"/>
    <property type="match status" value="1"/>
</dbReference>
<evidence type="ECO:0000255" key="1">
    <source>
        <dbReference type="HAMAP-Rule" id="MF_00163"/>
    </source>
</evidence>
<reference key="1">
    <citation type="journal article" date="2005" name="J. Bacteriol.">
        <title>Insights on evolution of virulence and resistance from the complete genome analysis of an early methicillin-resistant Staphylococcus aureus strain and a biofilm-producing methicillin-resistant Staphylococcus epidermidis strain.</title>
        <authorList>
            <person name="Gill S.R."/>
            <person name="Fouts D.E."/>
            <person name="Archer G.L."/>
            <person name="Mongodin E.F."/>
            <person name="DeBoy R.T."/>
            <person name="Ravel J."/>
            <person name="Paulsen I.T."/>
            <person name="Kolonay J.F."/>
            <person name="Brinkac L.M."/>
            <person name="Beanan M.J."/>
            <person name="Dodson R.J."/>
            <person name="Daugherty S.C."/>
            <person name="Madupu R."/>
            <person name="Angiuoli S.V."/>
            <person name="Durkin A.S."/>
            <person name="Haft D.H."/>
            <person name="Vamathevan J.J."/>
            <person name="Khouri H."/>
            <person name="Utterback T.R."/>
            <person name="Lee C."/>
            <person name="Dimitrov G."/>
            <person name="Jiang L."/>
            <person name="Qin H."/>
            <person name="Weidman J."/>
            <person name="Tran K."/>
            <person name="Kang K.H."/>
            <person name="Hance I.R."/>
            <person name="Nelson K.E."/>
            <person name="Fraser C.M."/>
        </authorList>
    </citation>
    <scope>NUCLEOTIDE SEQUENCE [LARGE SCALE GENOMIC DNA]</scope>
    <source>
        <strain>ATCC 35984 / DSM 28319 / BCRC 17069 / CCUG 31568 / BM 3577 / RP62A</strain>
    </source>
</reference>
<keyword id="KW-0378">Hydrolase</keyword>
<keyword id="KW-0408">Iron</keyword>
<keyword id="KW-0479">Metal-binding</keyword>
<keyword id="KW-0648">Protein biosynthesis</keyword>
<keyword id="KW-1185">Reference proteome</keyword>
<gene>
    <name evidence="1" type="primary">def</name>
    <name type="ordered locus">SERP0678</name>
</gene>
<proteinExistence type="inferred from homology"/>
<accession>Q5HQ78</accession>